<accession>Q3U0P5</accession>
<name>ENTP6_MOUSE</name>
<feature type="chain" id="PRO_0000451958" description="Ectonucleoside triphosphate diphosphohydrolase 6">
    <location>
        <begin position="1"/>
        <end position="455"/>
    </location>
</feature>
<feature type="topological domain" description="Cytoplasmic" evidence="4">
    <location>
        <begin position="1"/>
        <end position="12"/>
    </location>
</feature>
<feature type="transmembrane region" description="Helical" evidence="4">
    <location>
        <begin position="13"/>
        <end position="32"/>
    </location>
</feature>
<feature type="topological domain" description="Lumenal" evidence="4">
    <location>
        <begin position="33"/>
        <end position="455"/>
    </location>
</feature>
<feature type="active site" description="Proton acceptor" evidence="1">
    <location>
        <position position="196"/>
    </location>
</feature>
<feature type="disulfide bond" evidence="2">
    <location>
        <begin position="297"/>
        <end position="327"/>
    </location>
</feature>
<feature type="disulfide bond" evidence="2">
    <location>
        <begin position="387"/>
        <end position="401"/>
    </location>
</feature>
<protein>
    <recommendedName>
        <fullName>Ectonucleoside triphosphate diphosphohydrolase 6</fullName>
        <shortName>NTPDase 6</shortName>
        <ecNumber evidence="2">3.6.1.6</ecNumber>
    </recommendedName>
    <alternativeName>
        <fullName>CD39 antigen-like 2</fullName>
    </alternativeName>
</protein>
<organism>
    <name type="scientific">Mus musculus</name>
    <name type="common">Mouse</name>
    <dbReference type="NCBI Taxonomy" id="10090"/>
    <lineage>
        <taxon>Eukaryota</taxon>
        <taxon>Metazoa</taxon>
        <taxon>Chordata</taxon>
        <taxon>Craniata</taxon>
        <taxon>Vertebrata</taxon>
        <taxon>Euteleostomi</taxon>
        <taxon>Mammalia</taxon>
        <taxon>Eutheria</taxon>
        <taxon>Euarchontoglires</taxon>
        <taxon>Glires</taxon>
        <taxon>Rodentia</taxon>
        <taxon>Myomorpha</taxon>
        <taxon>Muroidea</taxon>
        <taxon>Muridae</taxon>
        <taxon>Murinae</taxon>
        <taxon>Mus</taxon>
        <taxon>Mus</taxon>
    </lineage>
</organism>
<proteinExistence type="evidence at protein level"/>
<dbReference type="EC" id="3.6.1.6" evidence="2"/>
<dbReference type="EMBL" id="AK156685">
    <property type="protein sequence ID" value="BAE33807.1"/>
    <property type="molecule type" value="mRNA"/>
</dbReference>
<dbReference type="EMBL" id="AL845174">
    <property type="status" value="NOT_ANNOTATED_CDS"/>
    <property type="molecule type" value="Genomic_DNA"/>
</dbReference>
<dbReference type="CCDS" id="CCDS16861.1"/>
<dbReference type="RefSeq" id="NP_001341997.1">
    <property type="nucleotide sequence ID" value="NM_001355068.1"/>
</dbReference>
<dbReference type="RefSeq" id="NP_742115.2">
    <property type="nucleotide sequence ID" value="NM_172117.5"/>
</dbReference>
<dbReference type="RefSeq" id="XP_006498706.1">
    <property type="nucleotide sequence ID" value="XM_006498643.2"/>
</dbReference>
<dbReference type="RefSeq" id="XP_030102887.1">
    <property type="nucleotide sequence ID" value="XM_030247027.2"/>
</dbReference>
<dbReference type="RefSeq" id="XP_030102889.1">
    <property type="nucleotide sequence ID" value="XM_030247029.1"/>
</dbReference>
<dbReference type="SMR" id="Q3U0P5"/>
<dbReference type="FunCoup" id="Q3U0P5">
    <property type="interactions" value="1595"/>
</dbReference>
<dbReference type="STRING" id="10090.ENSMUSP00000092038"/>
<dbReference type="GlyGen" id="Q3U0P5">
    <property type="glycosylation" value="1 site, 1 N-linked glycan (1 site)"/>
</dbReference>
<dbReference type="iPTMnet" id="Q3U0P5"/>
<dbReference type="PhosphoSitePlus" id="Q3U0P5"/>
<dbReference type="SwissPalm" id="Q3U0P5"/>
<dbReference type="PaxDb" id="10090-ENSMUSP00000092038"/>
<dbReference type="PeptideAtlas" id="Q3U0P5"/>
<dbReference type="ProteomicsDB" id="332339"/>
<dbReference type="Antibodypedia" id="24986">
    <property type="antibodies" value="104 antibodies from 27 providers"/>
</dbReference>
<dbReference type="DNASU" id="12497"/>
<dbReference type="Ensembl" id="ENSMUST00000094467.6">
    <property type="protein sequence ID" value="ENSMUSP00000092038.6"/>
    <property type="gene ID" value="ENSMUSG00000033068.17"/>
</dbReference>
<dbReference type="GeneID" id="12497"/>
<dbReference type="KEGG" id="mmu:12497"/>
<dbReference type="UCSC" id="uc012cfv.1">
    <property type="organism name" value="mouse"/>
</dbReference>
<dbReference type="AGR" id="MGI:1202295"/>
<dbReference type="CTD" id="955"/>
<dbReference type="MGI" id="MGI:1202295">
    <property type="gene designation" value="Entpd6"/>
</dbReference>
<dbReference type="VEuPathDB" id="HostDB:ENSMUSG00000033068"/>
<dbReference type="eggNOG" id="KOG1385">
    <property type="taxonomic scope" value="Eukaryota"/>
</dbReference>
<dbReference type="GeneTree" id="ENSGT01110000267162"/>
<dbReference type="HOGENOM" id="CLU_010246_0_2_1"/>
<dbReference type="InParanoid" id="Q3U0P5"/>
<dbReference type="OMA" id="CLVENMN"/>
<dbReference type="OrthoDB" id="6372431at2759"/>
<dbReference type="PhylomeDB" id="Q3U0P5"/>
<dbReference type="TreeFam" id="TF315029"/>
<dbReference type="Reactome" id="R-MMU-8850843">
    <property type="pathway name" value="Phosphate bond hydrolysis by NTPDase proteins"/>
</dbReference>
<dbReference type="BioGRID-ORCS" id="12497">
    <property type="hits" value="4 hits in 76 CRISPR screens"/>
</dbReference>
<dbReference type="ChiTaRS" id="Entpd6">
    <property type="organism name" value="mouse"/>
</dbReference>
<dbReference type="PRO" id="PR:Q3U0P5"/>
<dbReference type="Proteomes" id="UP000000589">
    <property type="component" value="Chromosome 2"/>
</dbReference>
<dbReference type="RNAct" id="Q3U0P5">
    <property type="molecule type" value="protein"/>
</dbReference>
<dbReference type="Bgee" id="ENSMUSG00000033068">
    <property type="expression patterns" value="Expressed in spermatocyte and 256 other cell types or tissues"/>
</dbReference>
<dbReference type="GO" id="GO:0009986">
    <property type="term" value="C:cell surface"/>
    <property type="evidence" value="ECO:0000250"/>
    <property type="project" value="UniProtKB"/>
</dbReference>
<dbReference type="GO" id="GO:0005615">
    <property type="term" value="C:extracellular space"/>
    <property type="evidence" value="ECO:0000250"/>
    <property type="project" value="UniProtKB"/>
</dbReference>
<dbReference type="GO" id="GO:0005794">
    <property type="term" value="C:Golgi apparatus"/>
    <property type="evidence" value="ECO:0000250"/>
    <property type="project" value="UniProtKB"/>
</dbReference>
<dbReference type="GO" id="GO:0000139">
    <property type="term" value="C:Golgi membrane"/>
    <property type="evidence" value="ECO:0007669"/>
    <property type="project" value="UniProtKB-SubCell"/>
</dbReference>
<dbReference type="GO" id="GO:0005886">
    <property type="term" value="C:plasma membrane"/>
    <property type="evidence" value="ECO:0007669"/>
    <property type="project" value="UniProtKB-SubCell"/>
</dbReference>
<dbReference type="GO" id="GO:0005524">
    <property type="term" value="F:ATP binding"/>
    <property type="evidence" value="ECO:0007669"/>
    <property type="project" value="UniProtKB-KW"/>
</dbReference>
<dbReference type="GO" id="GO:0036384">
    <property type="term" value="F:CDP phosphatase activity"/>
    <property type="evidence" value="ECO:0000250"/>
    <property type="project" value="UniProtKB"/>
</dbReference>
<dbReference type="GO" id="GO:0004382">
    <property type="term" value="F:GDP phosphatase activity"/>
    <property type="evidence" value="ECO:0000250"/>
    <property type="project" value="UniProtKB"/>
</dbReference>
<dbReference type="GO" id="GO:0008894">
    <property type="term" value="F:guanosine-5'-triphosphate,3'-diphosphate diphosphatase activity"/>
    <property type="evidence" value="ECO:0007669"/>
    <property type="project" value="Ensembl"/>
</dbReference>
<dbReference type="GO" id="GO:1990003">
    <property type="term" value="F:IDP phosphatase activity"/>
    <property type="evidence" value="ECO:0007669"/>
    <property type="project" value="Ensembl"/>
</dbReference>
<dbReference type="GO" id="GO:0017110">
    <property type="term" value="F:nucleoside diphosphate phosphatase activity"/>
    <property type="evidence" value="ECO:0000250"/>
    <property type="project" value="UniProtKB"/>
</dbReference>
<dbReference type="GO" id="GO:0017111">
    <property type="term" value="F:ribonucleoside triphosphate phosphatase activity"/>
    <property type="evidence" value="ECO:0007669"/>
    <property type="project" value="Ensembl"/>
</dbReference>
<dbReference type="GO" id="GO:0045134">
    <property type="term" value="F:UDP phosphatase activity"/>
    <property type="evidence" value="ECO:0000250"/>
    <property type="project" value="UniProtKB"/>
</dbReference>
<dbReference type="GO" id="GO:0051592">
    <property type="term" value="P:response to calcium ion"/>
    <property type="evidence" value="ECO:0007669"/>
    <property type="project" value="Ensembl"/>
</dbReference>
<dbReference type="GO" id="GO:0032026">
    <property type="term" value="P:response to magnesium ion"/>
    <property type="evidence" value="ECO:0007669"/>
    <property type="project" value="Ensembl"/>
</dbReference>
<dbReference type="CDD" id="cd24115">
    <property type="entry name" value="ASKHA_NBD_NTPDase6"/>
    <property type="match status" value="1"/>
</dbReference>
<dbReference type="FunFam" id="3.30.420.150:FF:000004">
    <property type="entry name" value="Ectonucleoside triphosphate diphosphohydrolase 5"/>
    <property type="match status" value="1"/>
</dbReference>
<dbReference type="FunFam" id="3.30.420.40:FF:000052">
    <property type="entry name" value="Ectonucleoside triphosphate diphosphohydrolase 5"/>
    <property type="match status" value="1"/>
</dbReference>
<dbReference type="Gene3D" id="3.30.420.40">
    <property type="match status" value="1"/>
</dbReference>
<dbReference type="Gene3D" id="3.30.420.150">
    <property type="entry name" value="Exopolyphosphatase. Domain 2"/>
    <property type="match status" value="1"/>
</dbReference>
<dbReference type="InterPro" id="IPR000407">
    <property type="entry name" value="GDA1_CD39_NTPase"/>
</dbReference>
<dbReference type="PANTHER" id="PTHR11782">
    <property type="entry name" value="ADENOSINE/GUANOSINE DIPHOSPHATASE"/>
    <property type="match status" value="1"/>
</dbReference>
<dbReference type="PANTHER" id="PTHR11782:SF99">
    <property type="entry name" value="ECTONUCLEOSIDE TRIPHOSPHATE DIPHOSPHOHYDROLASE 6"/>
    <property type="match status" value="1"/>
</dbReference>
<dbReference type="Pfam" id="PF01150">
    <property type="entry name" value="GDA1_CD39"/>
    <property type="match status" value="1"/>
</dbReference>
<dbReference type="PROSITE" id="PS01238">
    <property type="entry name" value="GDA1_CD39_NTPASE"/>
    <property type="match status" value="1"/>
</dbReference>
<gene>
    <name evidence="6" type="primary">Entpd6</name>
    <name type="synonym">Cd39l2</name>
</gene>
<reference key="1">
    <citation type="journal article" date="2005" name="Science">
        <title>The transcriptional landscape of the mammalian genome.</title>
        <authorList>
            <person name="Carninci P."/>
            <person name="Kasukawa T."/>
            <person name="Katayama S."/>
            <person name="Gough J."/>
            <person name="Frith M.C."/>
            <person name="Maeda N."/>
            <person name="Oyama R."/>
            <person name="Ravasi T."/>
            <person name="Lenhard B."/>
            <person name="Wells C."/>
            <person name="Kodzius R."/>
            <person name="Shimokawa K."/>
            <person name="Bajic V.B."/>
            <person name="Brenner S.E."/>
            <person name="Batalov S."/>
            <person name="Forrest A.R."/>
            <person name="Zavolan M."/>
            <person name="Davis M.J."/>
            <person name="Wilming L.G."/>
            <person name="Aidinis V."/>
            <person name="Allen J.E."/>
            <person name="Ambesi-Impiombato A."/>
            <person name="Apweiler R."/>
            <person name="Aturaliya R.N."/>
            <person name="Bailey T.L."/>
            <person name="Bansal M."/>
            <person name="Baxter L."/>
            <person name="Beisel K.W."/>
            <person name="Bersano T."/>
            <person name="Bono H."/>
            <person name="Chalk A.M."/>
            <person name="Chiu K.P."/>
            <person name="Choudhary V."/>
            <person name="Christoffels A."/>
            <person name="Clutterbuck D.R."/>
            <person name="Crowe M.L."/>
            <person name="Dalla E."/>
            <person name="Dalrymple B.P."/>
            <person name="de Bono B."/>
            <person name="Della Gatta G."/>
            <person name="di Bernardo D."/>
            <person name="Down T."/>
            <person name="Engstrom P."/>
            <person name="Fagiolini M."/>
            <person name="Faulkner G."/>
            <person name="Fletcher C.F."/>
            <person name="Fukushima T."/>
            <person name="Furuno M."/>
            <person name="Futaki S."/>
            <person name="Gariboldi M."/>
            <person name="Georgii-Hemming P."/>
            <person name="Gingeras T.R."/>
            <person name="Gojobori T."/>
            <person name="Green R.E."/>
            <person name="Gustincich S."/>
            <person name="Harbers M."/>
            <person name="Hayashi Y."/>
            <person name="Hensch T.K."/>
            <person name="Hirokawa N."/>
            <person name="Hill D."/>
            <person name="Huminiecki L."/>
            <person name="Iacono M."/>
            <person name="Ikeo K."/>
            <person name="Iwama A."/>
            <person name="Ishikawa T."/>
            <person name="Jakt M."/>
            <person name="Kanapin A."/>
            <person name="Katoh M."/>
            <person name="Kawasawa Y."/>
            <person name="Kelso J."/>
            <person name="Kitamura H."/>
            <person name="Kitano H."/>
            <person name="Kollias G."/>
            <person name="Krishnan S.P."/>
            <person name="Kruger A."/>
            <person name="Kummerfeld S.K."/>
            <person name="Kurochkin I.V."/>
            <person name="Lareau L.F."/>
            <person name="Lazarevic D."/>
            <person name="Lipovich L."/>
            <person name="Liu J."/>
            <person name="Liuni S."/>
            <person name="McWilliam S."/>
            <person name="Madan Babu M."/>
            <person name="Madera M."/>
            <person name="Marchionni L."/>
            <person name="Matsuda H."/>
            <person name="Matsuzawa S."/>
            <person name="Miki H."/>
            <person name="Mignone F."/>
            <person name="Miyake S."/>
            <person name="Morris K."/>
            <person name="Mottagui-Tabar S."/>
            <person name="Mulder N."/>
            <person name="Nakano N."/>
            <person name="Nakauchi H."/>
            <person name="Ng P."/>
            <person name="Nilsson R."/>
            <person name="Nishiguchi S."/>
            <person name="Nishikawa S."/>
            <person name="Nori F."/>
            <person name="Ohara O."/>
            <person name="Okazaki Y."/>
            <person name="Orlando V."/>
            <person name="Pang K.C."/>
            <person name="Pavan W.J."/>
            <person name="Pavesi G."/>
            <person name="Pesole G."/>
            <person name="Petrovsky N."/>
            <person name="Piazza S."/>
            <person name="Reed J."/>
            <person name="Reid J.F."/>
            <person name="Ring B.Z."/>
            <person name="Ringwald M."/>
            <person name="Rost B."/>
            <person name="Ruan Y."/>
            <person name="Salzberg S.L."/>
            <person name="Sandelin A."/>
            <person name="Schneider C."/>
            <person name="Schoenbach C."/>
            <person name="Sekiguchi K."/>
            <person name="Semple C.A."/>
            <person name="Seno S."/>
            <person name="Sessa L."/>
            <person name="Sheng Y."/>
            <person name="Shibata Y."/>
            <person name="Shimada H."/>
            <person name="Shimada K."/>
            <person name="Silva D."/>
            <person name="Sinclair B."/>
            <person name="Sperling S."/>
            <person name="Stupka E."/>
            <person name="Sugiura K."/>
            <person name="Sultana R."/>
            <person name="Takenaka Y."/>
            <person name="Taki K."/>
            <person name="Tammoja K."/>
            <person name="Tan S.L."/>
            <person name="Tang S."/>
            <person name="Taylor M.S."/>
            <person name="Tegner J."/>
            <person name="Teichmann S.A."/>
            <person name="Ueda H.R."/>
            <person name="van Nimwegen E."/>
            <person name="Verardo R."/>
            <person name="Wei C.L."/>
            <person name="Yagi K."/>
            <person name="Yamanishi H."/>
            <person name="Zabarovsky E."/>
            <person name="Zhu S."/>
            <person name="Zimmer A."/>
            <person name="Hide W."/>
            <person name="Bult C."/>
            <person name="Grimmond S.M."/>
            <person name="Teasdale R.D."/>
            <person name="Liu E.T."/>
            <person name="Brusic V."/>
            <person name="Quackenbush J."/>
            <person name="Wahlestedt C."/>
            <person name="Mattick J.S."/>
            <person name="Hume D.A."/>
            <person name="Kai C."/>
            <person name="Sasaki D."/>
            <person name="Tomaru Y."/>
            <person name="Fukuda S."/>
            <person name="Kanamori-Katayama M."/>
            <person name="Suzuki M."/>
            <person name="Aoki J."/>
            <person name="Arakawa T."/>
            <person name="Iida J."/>
            <person name="Imamura K."/>
            <person name="Itoh M."/>
            <person name="Kato T."/>
            <person name="Kawaji H."/>
            <person name="Kawagashira N."/>
            <person name="Kawashima T."/>
            <person name="Kojima M."/>
            <person name="Kondo S."/>
            <person name="Konno H."/>
            <person name="Nakano K."/>
            <person name="Ninomiya N."/>
            <person name="Nishio T."/>
            <person name="Okada M."/>
            <person name="Plessy C."/>
            <person name="Shibata K."/>
            <person name="Shiraki T."/>
            <person name="Suzuki S."/>
            <person name="Tagami M."/>
            <person name="Waki K."/>
            <person name="Watahiki A."/>
            <person name="Okamura-Oho Y."/>
            <person name="Suzuki H."/>
            <person name="Kawai J."/>
            <person name="Hayashizaki Y."/>
        </authorList>
    </citation>
    <scope>NUCLEOTIDE SEQUENCE [LARGE SCALE MRNA]</scope>
    <source>
        <strain>NOD</strain>
    </source>
</reference>
<reference key="2">
    <citation type="journal article" date="2009" name="PLoS Biol.">
        <title>Lineage-specific biology revealed by a finished genome assembly of the mouse.</title>
        <authorList>
            <person name="Church D.M."/>
            <person name="Goodstadt L."/>
            <person name="Hillier L.W."/>
            <person name="Zody M.C."/>
            <person name="Goldstein S."/>
            <person name="She X."/>
            <person name="Bult C.J."/>
            <person name="Agarwala R."/>
            <person name="Cherry J.L."/>
            <person name="DiCuccio M."/>
            <person name="Hlavina W."/>
            <person name="Kapustin Y."/>
            <person name="Meric P."/>
            <person name="Maglott D."/>
            <person name="Birtle Z."/>
            <person name="Marques A.C."/>
            <person name="Graves T."/>
            <person name="Zhou S."/>
            <person name="Teague B."/>
            <person name="Potamousis K."/>
            <person name="Churas C."/>
            <person name="Place M."/>
            <person name="Herschleb J."/>
            <person name="Runnheim R."/>
            <person name="Forrest D."/>
            <person name="Amos-Landgraf J."/>
            <person name="Schwartz D.C."/>
            <person name="Cheng Z."/>
            <person name="Lindblad-Toh K."/>
            <person name="Eichler E.E."/>
            <person name="Ponting C.P."/>
        </authorList>
    </citation>
    <scope>NUCLEOTIDE SEQUENCE [LARGE SCALE GENOMIC DNA]</scope>
    <source>
        <strain>C57BL/6J</strain>
    </source>
</reference>
<reference key="3">
    <citation type="journal article" date="2010" name="Cell">
        <title>A tissue-specific atlas of mouse protein phosphorylation and expression.</title>
        <authorList>
            <person name="Huttlin E.L."/>
            <person name="Jedrychowski M.P."/>
            <person name="Elias J.E."/>
            <person name="Goswami T."/>
            <person name="Rad R."/>
            <person name="Beausoleil S.A."/>
            <person name="Villen J."/>
            <person name="Haas W."/>
            <person name="Sowa M.E."/>
            <person name="Gygi S.P."/>
        </authorList>
    </citation>
    <scope>IDENTIFICATION BY MASS SPECTROMETRY [LARGE SCALE ANALYSIS]</scope>
</reference>
<sequence length="455" mass="49799">MRKIPNHGTLRMTKVAYPLGLCVGLFIYVAYIKWHRASAAQAFFTIAGAASGARWTQQAFSSPGSAARGHEVFYGIMFDAGSTGTRIHVFQFARPPGETPTLTHETFKALKPGLSAYADDVEKSAQGIQELLNVAKQHIPYDFWKATPLVLKATAGLRLLPGEKAQKLLQKVKEVFKASPFLVGDDCVSIMNGTDEGVSAWITVNFLTGSLKTPGSSSVGMLDLGGGSTQITFLPRVEGTLQASPPGHLTALQMFNRTYKLYSYSYLGLGLMSARLAILGGVEGKPAENDKELVSPCLSPRFRGEWEHAEVTYRISGQKAVGLYELCASRVSEVLRNKVHRTEEAQHVDFYAFSYYYDLAASFGLIDAEKGGSLVVGDFEIAAKYVCRTLETQPPSSPFACMDLTYISLLLHEFGFPGDKVLKLARKIDNVETSWALGAIFHYIDSLKRQKVPAL</sequence>
<keyword id="KW-0067">ATP-binding</keyword>
<keyword id="KW-0106">Calcium</keyword>
<keyword id="KW-1003">Cell membrane</keyword>
<keyword id="KW-1015">Disulfide bond</keyword>
<keyword id="KW-0325">Glycoprotein</keyword>
<keyword id="KW-0333">Golgi apparatus</keyword>
<keyword id="KW-0378">Hydrolase</keyword>
<keyword id="KW-0460">Magnesium</keyword>
<keyword id="KW-0472">Membrane</keyword>
<keyword id="KW-0547">Nucleotide-binding</keyword>
<keyword id="KW-1185">Reference proteome</keyword>
<keyword id="KW-0964">Secreted</keyword>
<keyword id="KW-0735">Signal-anchor</keyword>
<keyword id="KW-0812">Transmembrane</keyword>
<keyword id="KW-1133">Transmembrane helix</keyword>
<comment type="function">
    <text evidence="3">Catalyzes the hydrolysis of nucleoside triphosphates and diphosphates in a calcium- or magnesium-dependent manner. Has a strong preference for nucleoside diphosphates, preferentially hydrolyzes GDP, IDP, and UDP, with slower hydrolysis of CDP, ITP, GTP, CTP, ADP, and UTP and virtually no hydrolysis of ATP. The membrane bound form might support glycosylation reactions in the Golgi apparatus and, when released from cells, might catalyze the hydrolysis of extracellular nucleotides.</text>
</comment>
<comment type="catalytic activity">
    <reaction evidence="2">
        <text>a ribonucleoside 5'-diphosphate + H2O = a ribonucleoside 5'-phosphate + phosphate + H(+)</text>
        <dbReference type="Rhea" id="RHEA:36799"/>
        <dbReference type="ChEBI" id="CHEBI:15377"/>
        <dbReference type="ChEBI" id="CHEBI:15378"/>
        <dbReference type="ChEBI" id="CHEBI:43474"/>
        <dbReference type="ChEBI" id="CHEBI:57930"/>
        <dbReference type="ChEBI" id="CHEBI:58043"/>
        <dbReference type="EC" id="3.6.1.6"/>
    </reaction>
</comment>
<comment type="catalytic activity">
    <reaction evidence="2">
        <text>IDP + H2O = IMP + phosphate + H(+)</text>
        <dbReference type="Rhea" id="RHEA:35207"/>
        <dbReference type="ChEBI" id="CHEBI:15377"/>
        <dbReference type="ChEBI" id="CHEBI:15378"/>
        <dbReference type="ChEBI" id="CHEBI:43474"/>
        <dbReference type="ChEBI" id="CHEBI:58053"/>
        <dbReference type="ChEBI" id="CHEBI:58280"/>
        <dbReference type="EC" id="3.6.1.6"/>
    </reaction>
</comment>
<comment type="catalytic activity">
    <reaction evidence="2">
        <text>GDP + H2O = GMP + phosphate + H(+)</text>
        <dbReference type="Rhea" id="RHEA:22156"/>
        <dbReference type="ChEBI" id="CHEBI:15377"/>
        <dbReference type="ChEBI" id="CHEBI:15378"/>
        <dbReference type="ChEBI" id="CHEBI:43474"/>
        <dbReference type="ChEBI" id="CHEBI:58115"/>
        <dbReference type="ChEBI" id="CHEBI:58189"/>
        <dbReference type="EC" id="3.6.1.6"/>
    </reaction>
</comment>
<comment type="catalytic activity">
    <reaction evidence="2">
        <text>UDP + H2O = UMP + phosphate + H(+)</text>
        <dbReference type="Rhea" id="RHEA:64876"/>
        <dbReference type="ChEBI" id="CHEBI:15377"/>
        <dbReference type="ChEBI" id="CHEBI:15378"/>
        <dbReference type="ChEBI" id="CHEBI:43474"/>
        <dbReference type="ChEBI" id="CHEBI:57865"/>
        <dbReference type="ChEBI" id="CHEBI:58223"/>
        <dbReference type="EC" id="3.6.1.6"/>
    </reaction>
</comment>
<comment type="cofactor">
    <cofactor evidence="2">
        <name>Mg(2+)</name>
        <dbReference type="ChEBI" id="CHEBI:18420"/>
    </cofactor>
    <cofactor evidence="2">
        <name>Ca(2+)</name>
        <dbReference type="ChEBI" id="CHEBI:29108"/>
    </cofactor>
    <text evidence="2">Strongly and equally activated by either Ca(2+) or Mg(2+).</text>
</comment>
<comment type="subcellular location">
    <subcellularLocation>
        <location evidence="3">Golgi apparatus membrane</location>
        <topology evidence="4">Single-pass type II membrane protein</topology>
    </subcellularLocation>
    <subcellularLocation>
        <location evidence="3">Secreted</location>
    </subcellularLocation>
    <subcellularLocation>
        <location evidence="3">Cell membrane</location>
        <topology evidence="4">Single-pass type II membrane protein</topology>
    </subcellularLocation>
    <text evidence="3">Exists as a secreted and membrane-bound forms in the medium of transfected cells, the secreted form is predominant.</text>
</comment>
<comment type="PTM">
    <text evidence="2">N-glycosylated.</text>
</comment>
<comment type="similarity">
    <text evidence="5">Belongs to the GDA1/CD39 NTPase family.</text>
</comment>
<evidence type="ECO:0000250" key="1">
    <source>
        <dbReference type="UniProtKB" id="O35795"/>
    </source>
</evidence>
<evidence type="ECO:0000250" key="2">
    <source>
        <dbReference type="UniProtKB" id="O75354"/>
    </source>
</evidence>
<evidence type="ECO:0000250" key="3">
    <source>
        <dbReference type="UniProtKB" id="Q9ER31"/>
    </source>
</evidence>
<evidence type="ECO:0000255" key="4"/>
<evidence type="ECO:0000305" key="5"/>
<evidence type="ECO:0000312" key="6">
    <source>
        <dbReference type="MGI" id="MGI:1202295"/>
    </source>
</evidence>